<name>NRDR_NITEC</name>
<dbReference type="EMBL" id="CP000450">
    <property type="protein sequence ID" value="ABI59795.1"/>
    <property type="molecule type" value="Genomic_DNA"/>
</dbReference>
<dbReference type="RefSeq" id="WP_011634601.1">
    <property type="nucleotide sequence ID" value="NC_008344.1"/>
</dbReference>
<dbReference type="SMR" id="Q0AFT7"/>
<dbReference type="STRING" id="335283.Neut_1551"/>
<dbReference type="KEGG" id="net:Neut_1551"/>
<dbReference type="eggNOG" id="COG1327">
    <property type="taxonomic scope" value="Bacteria"/>
</dbReference>
<dbReference type="HOGENOM" id="CLU_108412_0_0_4"/>
<dbReference type="OrthoDB" id="9807461at2"/>
<dbReference type="Proteomes" id="UP000001966">
    <property type="component" value="Chromosome"/>
</dbReference>
<dbReference type="GO" id="GO:0005524">
    <property type="term" value="F:ATP binding"/>
    <property type="evidence" value="ECO:0007669"/>
    <property type="project" value="UniProtKB-KW"/>
</dbReference>
<dbReference type="GO" id="GO:0003677">
    <property type="term" value="F:DNA binding"/>
    <property type="evidence" value="ECO:0007669"/>
    <property type="project" value="UniProtKB-KW"/>
</dbReference>
<dbReference type="GO" id="GO:0008270">
    <property type="term" value="F:zinc ion binding"/>
    <property type="evidence" value="ECO:0007669"/>
    <property type="project" value="UniProtKB-UniRule"/>
</dbReference>
<dbReference type="GO" id="GO:0045892">
    <property type="term" value="P:negative regulation of DNA-templated transcription"/>
    <property type="evidence" value="ECO:0007669"/>
    <property type="project" value="UniProtKB-UniRule"/>
</dbReference>
<dbReference type="HAMAP" id="MF_00440">
    <property type="entry name" value="NrdR"/>
    <property type="match status" value="1"/>
</dbReference>
<dbReference type="InterPro" id="IPR005144">
    <property type="entry name" value="ATP-cone_dom"/>
</dbReference>
<dbReference type="InterPro" id="IPR055173">
    <property type="entry name" value="NrdR-like_N"/>
</dbReference>
<dbReference type="InterPro" id="IPR003796">
    <property type="entry name" value="RNR_NrdR-like"/>
</dbReference>
<dbReference type="NCBIfam" id="TIGR00244">
    <property type="entry name" value="transcriptional regulator NrdR"/>
    <property type="match status" value="1"/>
</dbReference>
<dbReference type="PANTHER" id="PTHR30455">
    <property type="entry name" value="TRANSCRIPTIONAL REPRESSOR NRDR"/>
    <property type="match status" value="1"/>
</dbReference>
<dbReference type="PANTHER" id="PTHR30455:SF2">
    <property type="entry name" value="TRANSCRIPTIONAL REPRESSOR NRDR"/>
    <property type="match status" value="1"/>
</dbReference>
<dbReference type="Pfam" id="PF03477">
    <property type="entry name" value="ATP-cone"/>
    <property type="match status" value="1"/>
</dbReference>
<dbReference type="Pfam" id="PF22811">
    <property type="entry name" value="Zn_ribbon_NrdR"/>
    <property type="match status" value="1"/>
</dbReference>
<dbReference type="PROSITE" id="PS51161">
    <property type="entry name" value="ATP_CONE"/>
    <property type="match status" value="1"/>
</dbReference>
<gene>
    <name evidence="1" type="primary">nrdR</name>
    <name type="ordered locus">Neut_1551</name>
</gene>
<evidence type="ECO:0000255" key="1">
    <source>
        <dbReference type="HAMAP-Rule" id="MF_00440"/>
    </source>
</evidence>
<comment type="function">
    <text evidence="1">Negatively regulates transcription of bacterial ribonucleotide reductase nrd genes and operons by binding to NrdR-boxes.</text>
</comment>
<comment type="cofactor">
    <cofactor evidence="1">
        <name>Zn(2+)</name>
        <dbReference type="ChEBI" id="CHEBI:29105"/>
    </cofactor>
    <text evidence="1">Binds 1 zinc ion.</text>
</comment>
<comment type="similarity">
    <text evidence="1">Belongs to the NrdR family.</text>
</comment>
<accession>Q0AFT7</accession>
<sequence>MRCPFCGAEDTSVVDSRVSEEGSRIRRRRQCTACGKRFTTYETVEVRFPQIIKQGGNRVEFNREKLYTSFARALHKRPVPVGQVDAAIERILQKLLGGGAQEISSRTIGEWVMQELYKLDKVAYIRFASVYRSFEDVGDFQEVIREVQASPSSLDDEPPG</sequence>
<protein>
    <recommendedName>
        <fullName evidence="1">Transcriptional repressor NrdR</fullName>
    </recommendedName>
</protein>
<reference key="1">
    <citation type="journal article" date="2007" name="Environ. Microbiol.">
        <title>Whole-genome analysis of the ammonia-oxidizing bacterium, Nitrosomonas eutropha C91: implications for niche adaptation.</title>
        <authorList>
            <person name="Stein L.Y."/>
            <person name="Arp D.J."/>
            <person name="Berube P.M."/>
            <person name="Chain P.S."/>
            <person name="Hauser L."/>
            <person name="Jetten M.S."/>
            <person name="Klotz M.G."/>
            <person name="Larimer F.W."/>
            <person name="Norton J.M."/>
            <person name="Op den Camp H.J.M."/>
            <person name="Shin M."/>
            <person name="Wei X."/>
        </authorList>
    </citation>
    <scope>NUCLEOTIDE SEQUENCE [LARGE SCALE GENOMIC DNA]</scope>
    <source>
        <strain>DSM 101675 / C91 / Nm57</strain>
    </source>
</reference>
<organism>
    <name type="scientific">Nitrosomonas eutropha (strain DSM 101675 / C91 / Nm57)</name>
    <dbReference type="NCBI Taxonomy" id="335283"/>
    <lineage>
        <taxon>Bacteria</taxon>
        <taxon>Pseudomonadati</taxon>
        <taxon>Pseudomonadota</taxon>
        <taxon>Betaproteobacteria</taxon>
        <taxon>Nitrosomonadales</taxon>
        <taxon>Nitrosomonadaceae</taxon>
        <taxon>Nitrosomonas</taxon>
    </lineage>
</organism>
<proteinExistence type="inferred from homology"/>
<keyword id="KW-0067">ATP-binding</keyword>
<keyword id="KW-0238">DNA-binding</keyword>
<keyword id="KW-0479">Metal-binding</keyword>
<keyword id="KW-0547">Nucleotide-binding</keyword>
<keyword id="KW-0678">Repressor</keyword>
<keyword id="KW-0804">Transcription</keyword>
<keyword id="KW-0805">Transcription regulation</keyword>
<keyword id="KW-0862">Zinc</keyword>
<keyword id="KW-0863">Zinc-finger</keyword>
<feature type="chain" id="PRO_1000080784" description="Transcriptional repressor NrdR">
    <location>
        <begin position="1"/>
        <end position="160"/>
    </location>
</feature>
<feature type="domain" description="ATP-cone" evidence="1">
    <location>
        <begin position="49"/>
        <end position="139"/>
    </location>
</feature>
<feature type="zinc finger region" evidence="1">
    <location>
        <begin position="3"/>
        <end position="34"/>
    </location>
</feature>